<protein>
    <recommendedName>
        <fullName>Probable NADH dehydrogenase [ubiquinone] 1 alpha subcomplex subunit 5, mitochondrial</fullName>
    </recommendedName>
</protein>
<gene>
    <name type="ordered locus">At5g52840</name>
    <name type="ORF">MXC20.6</name>
</gene>
<reference evidence="4" key="1">
    <citation type="journal article" date="1998" name="DNA Res.">
        <title>Structural analysis of Arabidopsis thaliana chromosome 5. IV. Sequence features of the regions of 1,456,315 bp covered by nineteen physically assigned P1 and TAC clones.</title>
        <authorList>
            <person name="Sato S."/>
            <person name="Kaneko T."/>
            <person name="Kotani H."/>
            <person name="Nakamura Y."/>
            <person name="Asamizu E."/>
            <person name="Miyajima N."/>
            <person name="Tabata S."/>
        </authorList>
    </citation>
    <scope>NUCLEOTIDE SEQUENCE [LARGE SCALE GENOMIC DNA]</scope>
    <source>
        <strain>cv. Columbia</strain>
    </source>
</reference>
<reference evidence="4 6" key="2">
    <citation type="journal article" date="2017" name="Plant J.">
        <title>Araport11: a complete reannotation of the Arabidopsis thaliana reference genome.</title>
        <authorList>
            <person name="Cheng C.Y."/>
            <person name="Krishnakumar V."/>
            <person name="Chan A.P."/>
            <person name="Thibaud-Nissen F."/>
            <person name="Schobel S."/>
            <person name="Town C.D."/>
        </authorList>
    </citation>
    <scope>GENOME REANNOTATION</scope>
    <source>
        <strain>cv. Columbia</strain>
    </source>
</reference>
<reference key="3">
    <citation type="journal article" date="2003" name="Science">
        <title>Empirical analysis of transcriptional activity in the Arabidopsis genome.</title>
        <authorList>
            <person name="Yamada K."/>
            <person name="Lim J."/>
            <person name="Dale J.M."/>
            <person name="Chen H."/>
            <person name="Shinn P."/>
            <person name="Palm C.J."/>
            <person name="Southwick A.M."/>
            <person name="Wu H.C."/>
            <person name="Kim C.J."/>
            <person name="Nguyen M."/>
            <person name="Pham P.K."/>
            <person name="Cheuk R.F."/>
            <person name="Karlin-Newmann G."/>
            <person name="Liu S.X."/>
            <person name="Lam B."/>
            <person name="Sakano H."/>
            <person name="Wu T."/>
            <person name="Yu G."/>
            <person name="Miranda M."/>
            <person name="Quach H.L."/>
            <person name="Tripp M."/>
            <person name="Chang C.H."/>
            <person name="Lee J.M."/>
            <person name="Toriumi M.J."/>
            <person name="Chan M.M."/>
            <person name="Tang C.C."/>
            <person name="Onodera C.S."/>
            <person name="Deng J.M."/>
            <person name="Akiyama K."/>
            <person name="Ansari Y."/>
            <person name="Arakawa T."/>
            <person name="Banh J."/>
            <person name="Banno F."/>
            <person name="Bowser L."/>
            <person name="Brooks S.Y."/>
            <person name="Carninci P."/>
            <person name="Chao Q."/>
            <person name="Choy N."/>
            <person name="Enju A."/>
            <person name="Goldsmith A.D."/>
            <person name="Gurjal M."/>
            <person name="Hansen N.F."/>
            <person name="Hayashizaki Y."/>
            <person name="Johnson-Hopson C."/>
            <person name="Hsuan V.W."/>
            <person name="Iida K."/>
            <person name="Karnes M."/>
            <person name="Khan S."/>
            <person name="Koesema E."/>
            <person name="Ishida J."/>
            <person name="Jiang P.X."/>
            <person name="Jones T."/>
            <person name="Kawai J."/>
            <person name="Kamiya A."/>
            <person name="Meyers C."/>
            <person name="Nakajima M."/>
            <person name="Narusaka M."/>
            <person name="Seki M."/>
            <person name="Sakurai T."/>
            <person name="Satou M."/>
            <person name="Tamse R."/>
            <person name="Vaysberg M."/>
            <person name="Wallender E.K."/>
            <person name="Wong C."/>
            <person name="Yamamura Y."/>
            <person name="Yuan S."/>
            <person name="Shinozaki K."/>
            <person name="Davis R.W."/>
            <person name="Theologis A."/>
            <person name="Ecker J.R."/>
        </authorList>
    </citation>
    <scope>NUCLEOTIDE SEQUENCE [LARGE SCALE MRNA]</scope>
    <source>
        <strain>cv. Columbia</strain>
    </source>
</reference>
<reference evidence="4" key="4">
    <citation type="journal article" date="2001" name="Plant Physiol.">
        <title>Proteomic approach to identify novel mitochondrial proteins in Arabidopsis.</title>
        <authorList>
            <person name="Kruft V."/>
            <person name="Eubel H."/>
            <person name="Jaensch L."/>
            <person name="Werhahn W."/>
            <person name="Braun H.-P."/>
        </authorList>
    </citation>
    <scope>PROTEIN SEQUENCE OF 12-26</scope>
    <source>
        <tissue>Leaf</tissue>
        <tissue>Stem</tissue>
    </source>
</reference>
<reference key="5">
    <citation type="journal article" date="2004" name="Plant Cell">
        <title>Experimental analysis of the Arabidopsis mitochondrial proteome highlights signaling and regulatory components, provides assessment of targeting prediction programs, and indicates plant-specific mitochondrial proteins.</title>
        <authorList>
            <person name="Heazlewood J.L."/>
            <person name="Tonti-Filippini J.S."/>
            <person name="Gout A.M."/>
            <person name="Day D.A."/>
            <person name="Whelan J."/>
            <person name="Millar A.H."/>
        </authorList>
    </citation>
    <scope>IDENTIFICATION BY MASS SPECTROMETRY</scope>
    <scope>SUBCELLULAR LOCATION [LARGE SCALE ANALYSIS]</scope>
    <source>
        <strain>cv. Landsberg erecta</strain>
    </source>
</reference>
<reference key="6">
    <citation type="journal article" date="2015" name="J. Exp. Bot.">
        <title>Identification of cleavage sites and substrate proteins for two mitochondrial intermediate peptidases in Arabidopsis thaliana.</title>
        <authorList>
            <person name="Carrie C."/>
            <person name="Venne A.S."/>
            <person name="Zahedi R.P."/>
            <person name="Soll J."/>
        </authorList>
    </citation>
    <scope>IDENTIFICATION BY MASS SPECTROMETRY</scope>
    <scope>CLEAVAGE OF TRANSIT PEPTIDE AFTER LEU-11</scope>
</reference>
<organism evidence="7">
    <name type="scientific">Arabidopsis thaliana</name>
    <name type="common">Mouse-ear cress</name>
    <dbReference type="NCBI Taxonomy" id="3702"/>
    <lineage>
        <taxon>Eukaryota</taxon>
        <taxon>Viridiplantae</taxon>
        <taxon>Streptophyta</taxon>
        <taxon>Embryophyta</taxon>
        <taxon>Tracheophyta</taxon>
        <taxon>Spermatophyta</taxon>
        <taxon>Magnoliopsida</taxon>
        <taxon>eudicotyledons</taxon>
        <taxon>Gunneridae</taxon>
        <taxon>Pentapetalae</taxon>
        <taxon>rosids</taxon>
        <taxon>malvids</taxon>
        <taxon>Brassicales</taxon>
        <taxon>Brassicaceae</taxon>
        <taxon>Camelineae</taxon>
        <taxon>Arabidopsis</taxon>
    </lineage>
</organism>
<keyword id="KW-0002">3D-structure</keyword>
<keyword id="KW-0903">Direct protein sequencing</keyword>
<keyword id="KW-0249">Electron transport</keyword>
<keyword id="KW-0472">Membrane</keyword>
<keyword id="KW-0496">Mitochondrion</keyword>
<keyword id="KW-0999">Mitochondrion inner membrane</keyword>
<keyword id="KW-1185">Reference proteome</keyword>
<keyword id="KW-0679">Respiratory chain</keyword>
<keyword id="KW-0809">Transit peptide</keyword>
<keyword id="KW-0813">Transport</keyword>
<name>NDUA5_ARATH</name>
<proteinExistence type="evidence at protein level"/>
<sequence length="169" mass="19179">MFLRAIGRPLLAKVKQTTGIVGLDVVPNARAVLIDLYSKTLKEIQAVPEDEGYRKAVESFTRQRLNVCKEEEDWEMIEKRLGCGQVEELIEEARDELTLIGKMIEWDPWGVPDDYECEVIENDAPIPKHVPQHRPGPLPEQFYKTLEGLIAESKTEIPAATPSDPQLKE</sequence>
<feature type="transit peptide" description="Mitochondrion" evidence="2 3">
    <location>
        <begin position="1"/>
        <end position="11"/>
    </location>
</feature>
<feature type="chain" id="PRO_0000019995" description="Probable NADH dehydrogenase [ubiquinone] 1 alpha subcomplex subunit 5, mitochondrial">
    <location>
        <begin position="12"/>
        <end position="169"/>
    </location>
</feature>
<feature type="strand" evidence="8">
    <location>
        <begin position="19"/>
        <end position="22"/>
    </location>
</feature>
<feature type="helix" evidence="9">
    <location>
        <begin position="29"/>
        <end position="43"/>
    </location>
</feature>
<feature type="helix" evidence="9">
    <location>
        <begin position="44"/>
        <end position="46"/>
    </location>
</feature>
<feature type="helix" evidence="9">
    <location>
        <begin position="52"/>
        <end position="70"/>
    </location>
</feature>
<feature type="helix" evidence="9">
    <location>
        <begin position="74"/>
        <end position="81"/>
    </location>
</feature>
<feature type="helix" evidence="9">
    <location>
        <begin position="86"/>
        <end position="106"/>
    </location>
</feature>
<feature type="strand" evidence="9">
    <location>
        <begin position="118"/>
        <end position="122"/>
    </location>
</feature>
<feature type="strand" evidence="8">
    <location>
        <begin position="128"/>
        <end position="130"/>
    </location>
</feature>
<feature type="helix" evidence="9">
    <location>
        <begin position="140"/>
        <end position="150"/>
    </location>
</feature>
<accession>Q9FLX7</accession>
<comment type="function">
    <text evidence="1">Accessory subunit of the mitochondrial membrane respiratory chain NADH dehydrogenase (Complex I), that is believed not to be involved in catalysis. Complex I functions in the transfer of electrons from NADH to the respiratory chain. The immediate electron acceptor for the enzyme is believed to be ubiquinone (By similarity).</text>
</comment>
<comment type="subunit">
    <text>Complex I is composed of at least 49 different subunits.</text>
</comment>
<comment type="subcellular location">
    <subcellularLocation>
        <location evidence="1 5">Mitochondrion inner membrane</location>
        <topology evidence="1">Peripheral membrane protein</topology>
        <orientation evidence="1">Matrix side</orientation>
    </subcellularLocation>
</comment>
<comment type="similarity">
    <text evidence="4">Belongs to the complex I NDUFA5 subunit family.</text>
</comment>
<dbReference type="EMBL" id="AB009055">
    <property type="protein sequence ID" value="BAB10432.1"/>
    <property type="molecule type" value="Genomic_DNA"/>
</dbReference>
<dbReference type="EMBL" id="CP002688">
    <property type="protein sequence ID" value="AED96267.1"/>
    <property type="molecule type" value="Genomic_DNA"/>
</dbReference>
<dbReference type="EMBL" id="AY054251">
    <property type="protein sequence ID" value="AAL06910.1"/>
    <property type="molecule type" value="mRNA"/>
</dbReference>
<dbReference type="EMBL" id="AY079117">
    <property type="protein sequence ID" value="AAL79599.1"/>
    <property type="molecule type" value="mRNA"/>
</dbReference>
<dbReference type="RefSeq" id="NP_568778.1">
    <property type="nucleotide sequence ID" value="NM_124662.4"/>
</dbReference>
<dbReference type="PDB" id="7A23">
    <property type="method" value="EM"/>
    <property type="resolution" value="3.70 A"/>
    <property type="chains" value="R=1-169"/>
</dbReference>
<dbReference type="PDB" id="7A24">
    <property type="method" value="EM"/>
    <property type="resolution" value="3.80 A"/>
    <property type="chains" value="R=1-169"/>
</dbReference>
<dbReference type="PDB" id="7AQR">
    <property type="method" value="EM"/>
    <property type="resolution" value="2.91 A"/>
    <property type="chains" value="V=1-169"/>
</dbReference>
<dbReference type="PDB" id="7AR7">
    <property type="method" value="EM"/>
    <property type="resolution" value="3.72 A"/>
    <property type="chains" value="V=12-151"/>
</dbReference>
<dbReference type="PDB" id="7AR8">
    <property type="method" value="EM"/>
    <property type="resolution" value="3.53 A"/>
    <property type="chains" value="V=1-169"/>
</dbReference>
<dbReference type="PDB" id="7ARB">
    <property type="method" value="EM"/>
    <property type="resolution" value="3.41 A"/>
    <property type="chains" value="V=1-169"/>
</dbReference>
<dbReference type="PDB" id="8BEE">
    <property type="method" value="EM"/>
    <property type="resolution" value="2.04 A"/>
    <property type="chains" value="V=1-169"/>
</dbReference>
<dbReference type="PDB" id="8BPX">
    <property type="method" value="EM"/>
    <property type="resolution" value="2.09 A"/>
    <property type="chains" value="V=1-169"/>
</dbReference>
<dbReference type="PDB" id="8BQ5">
    <property type="method" value="EM"/>
    <property type="resolution" value="2.73 A"/>
    <property type="chains" value="V=1-169"/>
</dbReference>
<dbReference type="PDB" id="8BQ6">
    <property type="method" value="EM"/>
    <property type="resolution" value="2.80 A"/>
    <property type="chains" value="V=1-169"/>
</dbReference>
<dbReference type="PDBsum" id="7A23"/>
<dbReference type="PDBsum" id="7A24"/>
<dbReference type="PDBsum" id="7AQR"/>
<dbReference type="PDBsum" id="7AR7"/>
<dbReference type="PDBsum" id="7AR8"/>
<dbReference type="PDBsum" id="7ARB"/>
<dbReference type="PDBsum" id="8BEE"/>
<dbReference type="PDBsum" id="8BPX"/>
<dbReference type="PDBsum" id="8BQ5"/>
<dbReference type="PDBsum" id="8BQ6"/>
<dbReference type="EMDB" id="EMD-11873"/>
<dbReference type="EMDB" id="EMD-11875"/>
<dbReference type="EMDB" id="EMD-11876"/>
<dbReference type="EMDB" id="EMD-11878"/>
<dbReference type="EMDB" id="EMD-15999"/>
<dbReference type="EMDB" id="EMD-16168"/>
<dbReference type="EMDB" id="EMD-16171"/>
<dbReference type="EMDB" id="EMD-16172"/>
<dbReference type="SMR" id="Q9FLX7"/>
<dbReference type="BioGRID" id="20606">
    <property type="interactions" value="1"/>
</dbReference>
<dbReference type="FunCoup" id="Q9FLX7">
    <property type="interactions" value="2697"/>
</dbReference>
<dbReference type="IntAct" id="Q9FLX7">
    <property type="interactions" value="3"/>
</dbReference>
<dbReference type="STRING" id="3702.Q9FLX7"/>
<dbReference type="TCDB" id="3.D.1.6.3">
    <property type="family name" value="the h+ or na+-translocating nadh dehydrogenase (ndh) family"/>
</dbReference>
<dbReference type="iPTMnet" id="Q9FLX7"/>
<dbReference type="SwissPalm" id="Q9FLX7"/>
<dbReference type="PaxDb" id="3702-AT5G52840.1"/>
<dbReference type="ProteomicsDB" id="251322"/>
<dbReference type="EnsemblPlants" id="AT5G52840.1">
    <property type="protein sequence ID" value="AT5G52840.1"/>
    <property type="gene ID" value="AT5G52840"/>
</dbReference>
<dbReference type="GeneID" id="835361"/>
<dbReference type="Gramene" id="AT5G52840.1">
    <property type="protein sequence ID" value="AT5G52840.1"/>
    <property type="gene ID" value="AT5G52840"/>
</dbReference>
<dbReference type="KEGG" id="ath:AT5G52840"/>
<dbReference type="Araport" id="AT5G52840"/>
<dbReference type="TAIR" id="AT5G52840"/>
<dbReference type="eggNOG" id="KOG3365">
    <property type="taxonomic scope" value="Eukaryota"/>
</dbReference>
<dbReference type="HOGENOM" id="CLU_099943_1_0_1"/>
<dbReference type="InParanoid" id="Q9FLX7"/>
<dbReference type="OrthoDB" id="286811at2759"/>
<dbReference type="PhylomeDB" id="Q9FLX7"/>
<dbReference type="BioCyc" id="ARA:AT5G52840-MONOMER"/>
<dbReference type="BioCyc" id="MetaCyc:AT5G52840-MONOMER"/>
<dbReference type="CD-CODE" id="4299E36E">
    <property type="entry name" value="Nucleolus"/>
</dbReference>
<dbReference type="PRO" id="PR:Q9FLX7"/>
<dbReference type="Proteomes" id="UP000006548">
    <property type="component" value="Chromosome 5"/>
</dbReference>
<dbReference type="ExpressionAtlas" id="Q9FLX7">
    <property type="expression patterns" value="baseline and differential"/>
</dbReference>
<dbReference type="GO" id="GO:0005743">
    <property type="term" value="C:mitochondrial inner membrane"/>
    <property type="evidence" value="ECO:0007669"/>
    <property type="project" value="UniProtKB-SubCell"/>
</dbReference>
<dbReference type="GO" id="GO:0031966">
    <property type="term" value="C:mitochondrial membrane"/>
    <property type="evidence" value="ECO:0000314"/>
    <property type="project" value="TAIR"/>
</dbReference>
<dbReference type="GO" id="GO:0005739">
    <property type="term" value="C:mitochondrion"/>
    <property type="evidence" value="ECO:0000314"/>
    <property type="project" value="TAIR"/>
</dbReference>
<dbReference type="GO" id="GO:0009536">
    <property type="term" value="C:plastid"/>
    <property type="evidence" value="ECO:0007005"/>
    <property type="project" value="TAIR"/>
</dbReference>
<dbReference type="GO" id="GO:0045271">
    <property type="term" value="C:respiratory chain complex I"/>
    <property type="evidence" value="ECO:0000314"/>
    <property type="project" value="TAIR"/>
</dbReference>
<dbReference type="GO" id="GO:0009853">
    <property type="term" value="P:photorespiration"/>
    <property type="evidence" value="ECO:0000304"/>
    <property type="project" value="TAIR"/>
</dbReference>
<dbReference type="GO" id="GO:0022904">
    <property type="term" value="P:respiratory electron transport chain"/>
    <property type="evidence" value="ECO:0007669"/>
    <property type="project" value="InterPro"/>
</dbReference>
<dbReference type="InterPro" id="IPR006806">
    <property type="entry name" value="NDUFA5"/>
</dbReference>
<dbReference type="PANTHER" id="PTHR12653:SF0">
    <property type="entry name" value="NADH DEHYDROGENASE [UBIQUINONE] 1 ALPHA SUBCOMPLEX SUBUNIT 5"/>
    <property type="match status" value="1"/>
</dbReference>
<dbReference type="PANTHER" id="PTHR12653">
    <property type="entry name" value="NADH-UBIQUINONE OXIDOREDUCTASE 13 KD-B SUBUNIT"/>
    <property type="match status" value="1"/>
</dbReference>
<dbReference type="Pfam" id="PF04716">
    <property type="entry name" value="ETC_C1_NDUFA5"/>
    <property type="match status" value="1"/>
</dbReference>
<evidence type="ECO:0000250" key="1"/>
<evidence type="ECO:0000269" key="2">
    <source>
    </source>
</evidence>
<evidence type="ECO:0000269" key="3">
    <source>
    </source>
</evidence>
<evidence type="ECO:0000305" key="4"/>
<evidence type="ECO:0000305" key="5">
    <source>
    </source>
</evidence>
<evidence type="ECO:0000312" key="6">
    <source>
        <dbReference type="EMBL" id="AAL79599.1"/>
    </source>
</evidence>
<evidence type="ECO:0000312" key="7">
    <source>
        <dbReference type="EMBL" id="BAB10432.1"/>
    </source>
</evidence>
<evidence type="ECO:0007829" key="8">
    <source>
        <dbReference type="PDB" id="7AQR"/>
    </source>
</evidence>
<evidence type="ECO:0007829" key="9">
    <source>
        <dbReference type="PDB" id="8BEE"/>
    </source>
</evidence>